<keyword id="KW-0963">Cytoplasm</keyword>
<keyword id="KW-0210">Decarboxylase</keyword>
<keyword id="KW-0456">Lyase</keyword>
<keyword id="KW-0627">Porphyrin biosynthesis</keyword>
<keyword id="KW-1185">Reference proteome</keyword>
<protein>
    <recommendedName>
        <fullName evidence="1">Uroporphyrinogen decarboxylase</fullName>
        <shortName evidence="1">UPD</shortName>
        <shortName evidence="1">URO-D</shortName>
        <ecNumber evidence="1">4.1.1.37</ecNumber>
    </recommendedName>
</protein>
<proteinExistence type="inferred from homology"/>
<dbReference type="EC" id="4.1.1.37" evidence="1"/>
<dbReference type="EMBL" id="CP000253">
    <property type="protein sequence ID" value="ABD31023.1"/>
    <property type="molecule type" value="Genomic_DNA"/>
</dbReference>
<dbReference type="RefSeq" id="WP_000233526.1">
    <property type="nucleotide sequence ID" value="NZ_LS483365.1"/>
</dbReference>
<dbReference type="RefSeq" id="YP_500461.1">
    <property type="nucleotide sequence ID" value="NC_007795.1"/>
</dbReference>
<dbReference type="SMR" id="Q2FXA3"/>
<dbReference type="STRING" id="93061.SAOUHSC_01962"/>
<dbReference type="PaxDb" id="1280-SAXN108_1863"/>
<dbReference type="GeneID" id="3920907"/>
<dbReference type="KEGG" id="sao:SAOUHSC_01962"/>
<dbReference type="PATRIC" id="fig|93061.5.peg.1787"/>
<dbReference type="eggNOG" id="COG0407">
    <property type="taxonomic scope" value="Bacteria"/>
</dbReference>
<dbReference type="HOGENOM" id="CLU_040933_0_1_9"/>
<dbReference type="OrthoDB" id="9806656at2"/>
<dbReference type="UniPathway" id="UPA00251">
    <property type="reaction ID" value="UER00321"/>
</dbReference>
<dbReference type="PRO" id="PR:Q2FXA3"/>
<dbReference type="Proteomes" id="UP000008816">
    <property type="component" value="Chromosome"/>
</dbReference>
<dbReference type="GO" id="GO:0005829">
    <property type="term" value="C:cytosol"/>
    <property type="evidence" value="ECO:0000318"/>
    <property type="project" value="GO_Central"/>
</dbReference>
<dbReference type="GO" id="GO:0004853">
    <property type="term" value="F:uroporphyrinogen decarboxylase activity"/>
    <property type="evidence" value="ECO:0000318"/>
    <property type="project" value="GO_Central"/>
</dbReference>
<dbReference type="GO" id="GO:0006783">
    <property type="term" value="P:heme biosynthetic process"/>
    <property type="evidence" value="ECO:0000318"/>
    <property type="project" value="GO_Central"/>
</dbReference>
<dbReference type="GO" id="GO:0006782">
    <property type="term" value="P:protoporphyrinogen IX biosynthetic process"/>
    <property type="evidence" value="ECO:0007669"/>
    <property type="project" value="UniProtKB-UniRule"/>
</dbReference>
<dbReference type="CDD" id="cd00717">
    <property type="entry name" value="URO-D"/>
    <property type="match status" value="1"/>
</dbReference>
<dbReference type="FunFam" id="3.20.20.210:FF:000005">
    <property type="entry name" value="Uroporphyrinogen decarboxylase"/>
    <property type="match status" value="1"/>
</dbReference>
<dbReference type="Gene3D" id="3.20.20.210">
    <property type="match status" value="1"/>
</dbReference>
<dbReference type="HAMAP" id="MF_00218">
    <property type="entry name" value="URO_D"/>
    <property type="match status" value="1"/>
</dbReference>
<dbReference type="InterPro" id="IPR038071">
    <property type="entry name" value="UROD/MetE-like_sf"/>
</dbReference>
<dbReference type="InterPro" id="IPR006361">
    <property type="entry name" value="Uroporphyrinogen_deCO2ase_HemE"/>
</dbReference>
<dbReference type="InterPro" id="IPR000257">
    <property type="entry name" value="Uroporphyrinogen_deCOase"/>
</dbReference>
<dbReference type="NCBIfam" id="TIGR01464">
    <property type="entry name" value="hemE"/>
    <property type="match status" value="1"/>
</dbReference>
<dbReference type="PANTHER" id="PTHR21091">
    <property type="entry name" value="METHYLTETRAHYDROFOLATE:HOMOCYSTEINE METHYLTRANSFERASE RELATED"/>
    <property type="match status" value="1"/>
</dbReference>
<dbReference type="PANTHER" id="PTHR21091:SF169">
    <property type="entry name" value="UROPORPHYRINOGEN DECARBOXYLASE"/>
    <property type="match status" value="1"/>
</dbReference>
<dbReference type="Pfam" id="PF01208">
    <property type="entry name" value="URO-D"/>
    <property type="match status" value="1"/>
</dbReference>
<dbReference type="SUPFAM" id="SSF51726">
    <property type="entry name" value="UROD/MetE-like"/>
    <property type="match status" value="1"/>
</dbReference>
<dbReference type="PROSITE" id="PS00906">
    <property type="entry name" value="UROD_1"/>
    <property type="match status" value="1"/>
</dbReference>
<dbReference type="PROSITE" id="PS00907">
    <property type="entry name" value="UROD_2"/>
    <property type="match status" value="1"/>
</dbReference>
<feature type="chain" id="PRO_1000023984" description="Uroporphyrinogen decarboxylase">
    <location>
        <begin position="1"/>
        <end position="345"/>
    </location>
</feature>
<feature type="binding site" evidence="1">
    <location>
        <begin position="27"/>
        <end position="31"/>
    </location>
    <ligand>
        <name>substrate</name>
    </ligand>
</feature>
<feature type="binding site" evidence="1">
    <location>
        <position position="46"/>
    </location>
    <ligand>
        <name>substrate</name>
    </ligand>
</feature>
<feature type="binding site" evidence="1">
    <location>
        <position position="76"/>
    </location>
    <ligand>
        <name>substrate</name>
    </ligand>
</feature>
<feature type="binding site" evidence="1">
    <location>
        <position position="152"/>
    </location>
    <ligand>
        <name>substrate</name>
    </ligand>
</feature>
<feature type="binding site" evidence="1">
    <location>
        <position position="207"/>
    </location>
    <ligand>
        <name>substrate</name>
    </ligand>
</feature>
<feature type="binding site" evidence="1">
    <location>
        <position position="321"/>
    </location>
    <ligand>
        <name>substrate</name>
    </ligand>
</feature>
<feature type="site" description="Transition state stabilizer" evidence="1">
    <location>
        <position position="76"/>
    </location>
</feature>
<name>DCUP_STAA8</name>
<evidence type="ECO:0000255" key="1">
    <source>
        <dbReference type="HAMAP-Rule" id="MF_00218"/>
    </source>
</evidence>
<accession>Q2FXA3</accession>
<comment type="function">
    <text evidence="1">Catalyzes the decarboxylation of four acetate groups of uroporphyrinogen-III to yield coproporphyrinogen-III.</text>
</comment>
<comment type="catalytic activity">
    <reaction evidence="1">
        <text>uroporphyrinogen III + 4 H(+) = coproporphyrinogen III + 4 CO2</text>
        <dbReference type="Rhea" id="RHEA:19865"/>
        <dbReference type="ChEBI" id="CHEBI:15378"/>
        <dbReference type="ChEBI" id="CHEBI:16526"/>
        <dbReference type="ChEBI" id="CHEBI:57308"/>
        <dbReference type="ChEBI" id="CHEBI:57309"/>
        <dbReference type="EC" id="4.1.1.37"/>
    </reaction>
</comment>
<comment type="pathway">
    <text evidence="1">Porphyrin-containing compound metabolism; protoporphyrin-IX biosynthesis; coproporphyrinogen-III from 5-aminolevulinate: step 4/4.</text>
</comment>
<comment type="subunit">
    <text evidence="1">Homodimer.</text>
</comment>
<comment type="subcellular location">
    <subcellularLocation>
        <location evidence="1">Cytoplasm</location>
    </subcellularLocation>
</comment>
<comment type="similarity">
    <text evidence="1">Belongs to the uroporphyrinogen decarboxylase family.</text>
</comment>
<sequence length="345" mass="39352">MVHNKNNTILKMIKGEETSHTPVWFMRQAGRSQPEYRKLKEKYSLFDITHQPELCAYVTHLPVDNYHTDAAILYKDIMTPLKPIGVDVEIKSGIGPVIHNPIKTIQDVEKLSQIDPERDVPYVLDTIKLLTEEKLNVPLIGFTGAPFTLASYMIEGGPSKNYNFTKAMMYRDEATWFALMNHLVDVSVKYVTAQVEAGAELIQIFDSWVGALNVEDYRRYIKPHMIRLISEVKEKHDVPVILFGVGASHLINEWNDLPIDVLGLDWRTSINQAQQLGVTKTLQGNLDPSILLAPWNVIEERLKPILDQGMENGKHIFNLGHGVFPEVQPETLRKVSEFVHTYTQR</sequence>
<organism>
    <name type="scientific">Staphylococcus aureus (strain NCTC 8325 / PS 47)</name>
    <dbReference type="NCBI Taxonomy" id="93061"/>
    <lineage>
        <taxon>Bacteria</taxon>
        <taxon>Bacillati</taxon>
        <taxon>Bacillota</taxon>
        <taxon>Bacilli</taxon>
        <taxon>Bacillales</taxon>
        <taxon>Staphylococcaceae</taxon>
        <taxon>Staphylococcus</taxon>
    </lineage>
</organism>
<reference key="1">
    <citation type="book" date="2006" name="Gram positive pathogens, 2nd edition">
        <title>The Staphylococcus aureus NCTC 8325 genome.</title>
        <editorList>
            <person name="Fischetti V."/>
            <person name="Novick R."/>
            <person name="Ferretti J."/>
            <person name="Portnoy D."/>
            <person name="Rood J."/>
        </editorList>
        <authorList>
            <person name="Gillaspy A.F."/>
            <person name="Worrell V."/>
            <person name="Orvis J."/>
            <person name="Roe B.A."/>
            <person name="Dyer D.W."/>
            <person name="Iandolo J.J."/>
        </authorList>
    </citation>
    <scope>NUCLEOTIDE SEQUENCE [LARGE SCALE GENOMIC DNA]</scope>
    <source>
        <strain>NCTC 8325 / PS 47</strain>
    </source>
</reference>
<gene>
    <name evidence="1" type="primary">hemE</name>
    <name type="ordered locus">SAOUHSC_01962</name>
</gene>